<proteinExistence type="evidence at protein level"/>
<protein>
    <recommendedName>
        <fullName>Guanine nucleotide-binding protein-like 3</fullName>
    </recommendedName>
    <alternativeName>
        <fullName>E2-induced gene 3 protein</fullName>
    </alternativeName>
    <alternativeName>
        <fullName>Novel nucleolar protein 47</fullName>
        <shortName>NNP47</shortName>
    </alternativeName>
    <alternativeName>
        <fullName>Nucleolar GTP-binding protein 3</fullName>
    </alternativeName>
    <alternativeName>
        <fullName>Nucleostemin</fullName>
    </alternativeName>
</protein>
<feature type="chain" id="PRO_0000122444" description="Guanine nucleotide-binding protein-like 3">
    <location>
        <begin position="1"/>
        <end position="549"/>
    </location>
</feature>
<feature type="domain" description="CP-type G" evidence="5">
    <location>
        <begin position="131"/>
        <end position="312"/>
    </location>
</feature>
<feature type="region of interest" description="Disordered" evidence="6">
    <location>
        <begin position="1"/>
        <end position="56"/>
    </location>
</feature>
<feature type="region of interest" description="Basic" evidence="1">
    <location>
        <begin position="2"/>
        <end position="46"/>
    </location>
</feature>
<feature type="region of interest" description="Disordered" evidence="6">
    <location>
        <begin position="73"/>
        <end position="104"/>
    </location>
</feature>
<feature type="region of interest" description="Intermediate" evidence="1">
    <location>
        <begin position="282"/>
        <end position="456"/>
    </location>
</feature>
<feature type="region of interest" description="Acidic" evidence="1">
    <location>
        <begin position="465"/>
        <end position="543"/>
    </location>
</feature>
<feature type="region of interest" description="Disordered" evidence="6">
    <location>
        <begin position="474"/>
        <end position="532"/>
    </location>
</feature>
<feature type="coiled-coil region" evidence="4">
    <location>
        <begin position="56"/>
        <end position="95"/>
    </location>
</feature>
<feature type="compositionally biased region" description="Basic residues" evidence="6">
    <location>
        <begin position="1"/>
        <end position="45"/>
    </location>
</feature>
<feature type="compositionally biased region" description="Basic and acidic residues" evidence="6">
    <location>
        <begin position="73"/>
        <end position="96"/>
    </location>
</feature>
<feature type="compositionally biased region" description="Basic and acidic residues" evidence="6">
    <location>
        <begin position="474"/>
        <end position="483"/>
    </location>
</feature>
<feature type="compositionally biased region" description="Acidic residues" evidence="6">
    <location>
        <begin position="484"/>
        <end position="501"/>
    </location>
</feature>
<feature type="compositionally biased region" description="Polar residues" evidence="6">
    <location>
        <begin position="518"/>
        <end position="529"/>
    </location>
</feature>
<feature type="binding site" evidence="4">
    <location>
        <begin position="178"/>
        <end position="181"/>
    </location>
    <ligand>
        <name>GTP</name>
        <dbReference type="ChEBI" id="CHEBI:37565"/>
    </ligand>
</feature>
<feature type="binding site" evidence="4">
    <location>
        <begin position="261"/>
        <end position="268"/>
    </location>
    <ligand>
        <name>GTP</name>
        <dbReference type="ChEBI" id="CHEBI:37565"/>
    </ligand>
</feature>
<feature type="binding site" evidence="4">
    <location>
        <begin position="305"/>
        <end position="308"/>
    </location>
    <ligand>
        <name>GTP</name>
        <dbReference type="ChEBI" id="CHEBI:37565"/>
    </ligand>
</feature>
<feature type="modified residue" description="N6-acetyllysine" evidence="16">
    <location>
        <position position="79"/>
    </location>
</feature>
<feature type="modified residue" description="Phosphoserine" evidence="2">
    <location>
        <position position="101"/>
    </location>
</feature>
<feature type="modified residue" description="Phosphoserine" evidence="19">
    <location>
        <position position="490"/>
    </location>
</feature>
<feature type="modified residue" description="Phosphoserine" evidence="3">
    <location>
        <position position="504"/>
    </location>
</feature>
<feature type="modified residue" description="Phosphoserine" evidence="19">
    <location>
        <position position="517"/>
    </location>
</feature>
<feature type="modified residue" description="Phosphoserine" evidence="17">
    <location>
        <position position="529"/>
    </location>
</feature>
<feature type="cross-link" description="Glycyl lysine isopeptide (Lys-Gly) (interchain with G-Cter in SUMO2)" evidence="22">
    <location>
        <position position="91"/>
    </location>
</feature>
<feature type="cross-link" description="Glycyl lysine isopeptide (Lys-Gly) (interchain with G-Cter in SUMO2)" evidence="20 21 22">
    <location>
        <position position="99"/>
    </location>
</feature>
<feature type="cross-link" description="Glycyl lysine isopeptide (Lys-Gly) (interchain with G-Cter in SUMO2)" evidence="21 22">
    <location>
        <position position="114"/>
    </location>
</feature>
<feature type="cross-link" description="Glycyl lysine isopeptide (Lys-Gly) (interchain with G-Cter in SUMO2)" evidence="22">
    <location>
        <position position="179"/>
    </location>
</feature>
<feature type="cross-link" description="Glycyl lysine isopeptide (Lys-Gly) (interchain with G-Cter in SUMO2)" evidence="22">
    <location>
        <position position="196"/>
    </location>
</feature>
<feature type="cross-link" description="Glycyl lysine isopeptide (Lys-Gly) (interchain with G-Cter in SUMO2)" evidence="22">
    <location>
        <position position="253"/>
    </location>
</feature>
<feature type="cross-link" description="Glycyl lysine isopeptide (Lys-Gly) (interchain with G-Cter in SUMO2)" evidence="22">
    <location>
        <position position="267"/>
    </location>
</feature>
<feature type="cross-link" description="Glycyl lysine isopeptide (Lys-Gly) (interchain with G-Cter in SUMO2)" evidence="22">
    <location>
        <position position="275"/>
    </location>
</feature>
<feature type="splice variant" id="VSP_013411" description="In isoform 2." evidence="14">
    <location>
        <begin position="1"/>
        <end position="12"/>
    </location>
</feature>
<feature type="sequence variant" id="VAR_022160" description="In dbSNP:rs11177." evidence="7 11 12">
    <original>R</original>
    <variation>Q</variation>
    <location>
        <position position="39"/>
    </location>
</feature>
<feature type="sequence variant" id="VAR_022161" description="In dbSNP:rs2289247." evidence="7 11 12 18">
    <original>V</original>
    <variation>M</variation>
    <location>
        <position position="367"/>
    </location>
</feature>
<feature type="sequence conflict" description="In Ref. 2; AAV74413." evidence="15" ref="2">
    <original>R</original>
    <variation>K</variation>
    <location>
        <position position="3"/>
    </location>
</feature>
<feature type="sequence conflict" description="In Ref. 2; AAV74413." evidence="15" ref="2">
    <original>L</original>
    <variation>Q</variation>
    <location>
        <position position="86"/>
    </location>
</feature>
<feature type="sequence conflict" description="In Ref. 2; AAV74413." evidence="15" ref="2">
    <original>N</original>
    <variation>D</variation>
    <location>
        <position position="436"/>
    </location>
</feature>
<feature type="sequence conflict" description="In Ref. 3; BAB55169." evidence="15" ref="3">
    <original>I</original>
    <variation>M</variation>
    <location>
        <position position="463"/>
    </location>
</feature>
<feature type="sequence conflict" description="In Ref. 2; AAV74413." evidence="15" ref="2">
    <original>V</original>
    <variation>A</variation>
    <location>
        <position position="495"/>
    </location>
</feature>
<sequence>MKRPKLKKASKRMTCHKRYKIQKKVREHHRKLRKEAKKRGHKKPRKDPGVPNSAPFKEALLREAELRKQRLEELKQQQKLDRQKELEKKRKLETNPDIKPSNVEPMEKEFGLCKTENKAKSGKQNSKKLYCQELKKVIEASDVVLEVLDARDPLGCRCPQVEEAIVQSGQKKLVLILNKSDLVPKENLESWLNYLKKELPTVVFRASTKPKDKGKITKRVKAKKNAAPFRSEVCFGKEGLWKLLGGFQETCSKAIRVGVIGFPNVGKSSIINSLKQEQMCNVGVSMGLTRSMQVVPLDKQITIIDSPSFIVSPLNSSSALALRSPASIEVVKPMEAASAILSQADARQVVLKYTVPGYRNSLEFFTVLAQRRGMHQKGGIPNVEGAAKLLWSEWTGASLAYYCHPPTSWTPPPYFNESIVVDMKSGFNLEELEKNNAQSIRAIKGPHLANSILFQSSGLTNGIIEEKDIHEELPKRKERKQEEREDDKDSDQETVDEEVDENSSGMFAAEETGEALSEETTAGEQSTRSFILDKIIEEDDAYDFSTDYV</sequence>
<reference key="1">
    <citation type="journal article" date="2000" name="Cancer Res.">
        <title>Effects of estrogen on global gene expression: identification of novel targets of estrogen action.</title>
        <authorList>
            <person name="Charpentier A.H."/>
            <person name="Bednarek A.K."/>
            <person name="Daniel R.L."/>
            <person name="Hawkins K.A."/>
            <person name="Laflin K.J."/>
            <person name="Gaddis S."/>
            <person name="MacLeod M.C."/>
            <person name="Aldaz C.M."/>
        </authorList>
    </citation>
    <scope>NUCLEOTIDE SEQUENCE [MRNA] (ISOFORM 1)</scope>
    <scope>VARIANTS GLN-39 AND MET-367</scope>
</reference>
<reference key="2">
    <citation type="journal article" date="2005" name="Int. J. Mol. Med.">
        <title>Cloning of the nucleostemin gene and its function in transforming human embryonic bone marrow mesenchymal stem cells into F6 tumor cells.</title>
        <authorList>
            <person name="Han C."/>
            <person name="Zhang X."/>
            <person name="Xu W."/>
            <person name="Wang W."/>
            <person name="Qian H."/>
            <person name="Chen Y."/>
        </authorList>
    </citation>
    <scope>NUCLEOTIDE SEQUENCE [MRNA] (ISOFORM 1)</scope>
    <scope>FUNCTION</scope>
    <scope>TISSUE SPECIFICITY</scope>
    <scope>VARIANTS GLN-39 AND MET-367</scope>
</reference>
<reference key="3">
    <citation type="journal article" date="2004" name="Nat. Genet.">
        <title>Complete sequencing and characterization of 21,243 full-length human cDNAs.</title>
        <authorList>
            <person name="Ota T."/>
            <person name="Suzuki Y."/>
            <person name="Nishikawa T."/>
            <person name="Otsuki T."/>
            <person name="Sugiyama T."/>
            <person name="Irie R."/>
            <person name="Wakamatsu A."/>
            <person name="Hayashi K."/>
            <person name="Sato H."/>
            <person name="Nagai K."/>
            <person name="Kimura K."/>
            <person name="Makita H."/>
            <person name="Sekine M."/>
            <person name="Obayashi M."/>
            <person name="Nishi T."/>
            <person name="Shibahara T."/>
            <person name="Tanaka T."/>
            <person name="Ishii S."/>
            <person name="Yamamoto J."/>
            <person name="Saito K."/>
            <person name="Kawai Y."/>
            <person name="Isono Y."/>
            <person name="Nakamura Y."/>
            <person name="Nagahari K."/>
            <person name="Murakami K."/>
            <person name="Yasuda T."/>
            <person name="Iwayanagi T."/>
            <person name="Wagatsuma M."/>
            <person name="Shiratori A."/>
            <person name="Sudo H."/>
            <person name="Hosoiri T."/>
            <person name="Kaku Y."/>
            <person name="Kodaira H."/>
            <person name="Kondo H."/>
            <person name="Sugawara M."/>
            <person name="Takahashi M."/>
            <person name="Kanda K."/>
            <person name="Yokoi T."/>
            <person name="Furuya T."/>
            <person name="Kikkawa E."/>
            <person name="Omura Y."/>
            <person name="Abe K."/>
            <person name="Kamihara K."/>
            <person name="Katsuta N."/>
            <person name="Sato K."/>
            <person name="Tanikawa M."/>
            <person name="Yamazaki M."/>
            <person name="Ninomiya K."/>
            <person name="Ishibashi T."/>
            <person name="Yamashita H."/>
            <person name="Murakawa K."/>
            <person name="Fujimori K."/>
            <person name="Tanai H."/>
            <person name="Kimata M."/>
            <person name="Watanabe M."/>
            <person name="Hiraoka S."/>
            <person name="Chiba Y."/>
            <person name="Ishida S."/>
            <person name="Ono Y."/>
            <person name="Takiguchi S."/>
            <person name="Watanabe S."/>
            <person name="Yosida M."/>
            <person name="Hotuta T."/>
            <person name="Kusano J."/>
            <person name="Kanehori K."/>
            <person name="Takahashi-Fujii A."/>
            <person name="Hara H."/>
            <person name="Tanase T.-O."/>
            <person name="Nomura Y."/>
            <person name="Togiya S."/>
            <person name="Komai F."/>
            <person name="Hara R."/>
            <person name="Takeuchi K."/>
            <person name="Arita M."/>
            <person name="Imose N."/>
            <person name="Musashino K."/>
            <person name="Yuuki H."/>
            <person name="Oshima A."/>
            <person name="Sasaki N."/>
            <person name="Aotsuka S."/>
            <person name="Yoshikawa Y."/>
            <person name="Matsunawa H."/>
            <person name="Ichihara T."/>
            <person name="Shiohata N."/>
            <person name="Sano S."/>
            <person name="Moriya S."/>
            <person name="Momiyama H."/>
            <person name="Satoh N."/>
            <person name="Takami S."/>
            <person name="Terashima Y."/>
            <person name="Suzuki O."/>
            <person name="Nakagawa S."/>
            <person name="Senoh A."/>
            <person name="Mizoguchi H."/>
            <person name="Goto Y."/>
            <person name="Shimizu F."/>
            <person name="Wakebe H."/>
            <person name="Hishigaki H."/>
            <person name="Watanabe T."/>
            <person name="Sugiyama A."/>
            <person name="Takemoto M."/>
            <person name="Kawakami B."/>
            <person name="Yamazaki M."/>
            <person name="Watanabe K."/>
            <person name="Kumagai A."/>
            <person name="Itakura S."/>
            <person name="Fukuzumi Y."/>
            <person name="Fujimori Y."/>
            <person name="Komiyama M."/>
            <person name="Tashiro H."/>
            <person name="Tanigami A."/>
            <person name="Fujiwara T."/>
            <person name="Ono T."/>
            <person name="Yamada K."/>
            <person name="Fujii Y."/>
            <person name="Ozaki K."/>
            <person name="Hirao M."/>
            <person name="Ohmori Y."/>
            <person name="Kawabata A."/>
            <person name="Hikiji T."/>
            <person name="Kobatake N."/>
            <person name="Inagaki H."/>
            <person name="Ikema Y."/>
            <person name="Okamoto S."/>
            <person name="Okitani R."/>
            <person name="Kawakami T."/>
            <person name="Noguchi S."/>
            <person name="Itoh T."/>
            <person name="Shigeta K."/>
            <person name="Senba T."/>
            <person name="Matsumura K."/>
            <person name="Nakajima Y."/>
            <person name="Mizuno T."/>
            <person name="Morinaga M."/>
            <person name="Sasaki M."/>
            <person name="Togashi T."/>
            <person name="Oyama M."/>
            <person name="Hata H."/>
            <person name="Watanabe M."/>
            <person name="Komatsu T."/>
            <person name="Mizushima-Sugano J."/>
            <person name="Satoh T."/>
            <person name="Shirai Y."/>
            <person name="Takahashi Y."/>
            <person name="Nakagawa K."/>
            <person name="Okumura K."/>
            <person name="Nagase T."/>
            <person name="Nomura N."/>
            <person name="Kikuchi H."/>
            <person name="Masuho Y."/>
            <person name="Yamashita R."/>
            <person name="Nakai K."/>
            <person name="Yada T."/>
            <person name="Nakamura Y."/>
            <person name="Ohara O."/>
            <person name="Isogai T."/>
            <person name="Sugano S."/>
        </authorList>
    </citation>
    <scope>NUCLEOTIDE SEQUENCE [LARGE SCALE MRNA] (ISOFORMS 1 AND 2)</scope>
</reference>
<reference key="4">
    <citation type="journal article" date="2006" name="Nature">
        <title>The DNA sequence, annotation and analysis of human chromosome 3.</title>
        <authorList>
            <person name="Muzny D.M."/>
            <person name="Scherer S.E."/>
            <person name="Kaul R."/>
            <person name="Wang J."/>
            <person name="Yu J."/>
            <person name="Sudbrak R."/>
            <person name="Buhay C.J."/>
            <person name="Chen R."/>
            <person name="Cree A."/>
            <person name="Ding Y."/>
            <person name="Dugan-Rocha S."/>
            <person name="Gill R."/>
            <person name="Gunaratne P."/>
            <person name="Harris R.A."/>
            <person name="Hawes A.C."/>
            <person name="Hernandez J."/>
            <person name="Hodgson A.V."/>
            <person name="Hume J."/>
            <person name="Jackson A."/>
            <person name="Khan Z.M."/>
            <person name="Kovar-Smith C."/>
            <person name="Lewis L.R."/>
            <person name="Lozado R.J."/>
            <person name="Metzker M.L."/>
            <person name="Milosavljevic A."/>
            <person name="Miner G.R."/>
            <person name="Morgan M.B."/>
            <person name="Nazareth L.V."/>
            <person name="Scott G."/>
            <person name="Sodergren E."/>
            <person name="Song X.-Z."/>
            <person name="Steffen D."/>
            <person name="Wei S."/>
            <person name="Wheeler D.A."/>
            <person name="Wright M.W."/>
            <person name="Worley K.C."/>
            <person name="Yuan Y."/>
            <person name="Zhang Z."/>
            <person name="Adams C.Q."/>
            <person name="Ansari-Lari M.A."/>
            <person name="Ayele M."/>
            <person name="Brown M.J."/>
            <person name="Chen G."/>
            <person name="Chen Z."/>
            <person name="Clendenning J."/>
            <person name="Clerc-Blankenburg K.P."/>
            <person name="Chen R."/>
            <person name="Chen Z."/>
            <person name="Davis C."/>
            <person name="Delgado O."/>
            <person name="Dinh H.H."/>
            <person name="Dong W."/>
            <person name="Draper H."/>
            <person name="Ernst S."/>
            <person name="Fu G."/>
            <person name="Gonzalez-Garay M.L."/>
            <person name="Garcia D.K."/>
            <person name="Gillett W."/>
            <person name="Gu J."/>
            <person name="Hao B."/>
            <person name="Haugen E."/>
            <person name="Havlak P."/>
            <person name="He X."/>
            <person name="Hennig S."/>
            <person name="Hu S."/>
            <person name="Huang W."/>
            <person name="Jackson L.R."/>
            <person name="Jacob L.S."/>
            <person name="Kelly S.H."/>
            <person name="Kube M."/>
            <person name="Levy R."/>
            <person name="Li Z."/>
            <person name="Liu B."/>
            <person name="Liu J."/>
            <person name="Liu W."/>
            <person name="Lu J."/>
            <person name="Maheshwari M."/>
            <person name="Nguyen B.-V."/>
            <person name="Okwuonu G.O."/>
            <person name="Palmeiri A."/>
            <person name="Pasternak S."/>
            <person name="Perez L.M."/>
            <person name="Phelps K.A."/>
            <person name="Plopper F.J."/>
            <person name="Qiang B."/>
            <person name="Raymond C."/>
            <person name="Rodriguez R."/>
            <person name="Saenphimmachak C."/>
            <person name="Santibanez J."/>
            <person name="Shen H."/>
            <person name="Shen Y."/>
            <person name="Subramanian S."/>
            <person name="Tabor P.E."/>
            <person name="Verduzco D."/>
            <person name="Waldron L."/>
            <person name="Wang J."/>
            <person name="Wang J."/>
            <person name="Wang Q."/>
            <person name="Williams G.A."/>
            <person name="Wong G.K.-S."/>
            <person name="Yao Z."/>
            <person name="Zhang J."/>
            <person name="Zhang X."/>
            <person name="Zhao G."/>
            <person name="Zhou J."/>
            <person name="Zhou Y."/>
            <person name="Nelson D."/>
            <person name="Lehrach H."/>
            <person name="Reinhardt R."/>
            <person name="Naylor S.L."/>
            <person name="Yang H."/>
            <person name="Olson M."/>
            <person name="Weinstock G."/>
            <person name="Gibbs R.A."/>
        </authorList>
    </citation>
    <scope>NUCLEOTIDE SEQUENCE [LARGE SCALE GENOMIC DNA]</scope>
</reference>
<reference key="5">
    <citation type="journal article" date="2004" name="Genome Res.">
        <title>The status, quality, and expansion of the NIH full-length cDNA project: the Mammalian Gene Collection (MGC).</title>
        <authorList>
            <consortium name="The MGC Project Team"/>
        </authorList>
    </citation>
    <scope>NUCLEOTIDE SEQUENCE [LARGE SCALE MRNA] (ISOFORM 1)</scope>
    <scope>VARIANTS GLN-39 AND MET-367</scope>
    <source>
        <tissue>Eye</tissue>
    </source>
</reference>
<reference key="6">
    <citation type="journal article" date="2002" name="Curr. Biol.">
        <title>Directed proteomic analysis of the human nucleolus.</title>
        <authorList>
            <person name="Andersen J.S."/>
            <person name="Lyon C.E."/>
            <person name="Fox A.H."/>
            <person name="Leung A.K.L."/>
            <person name="Lam Y.W."/>
            <person name="Steen H."/>
            <person name="Mann M."/>
            <person name="Lamond A.I."/>
        </authorList>
    </citation>
    <scope>IDENTIFICATION BY MASS SPECTROMETRY</scope>
    <scope>SUBCELLULAR LOCATION</scope>
</reference>
<reference key="7">
    <citation type="journal article" date="2002" name="Mol. Biol. Cell">
        <title>Functional proteomic analysis of human nucleolus.</title>
        <authorList>
            <person name="Scherl A."/>
            <person name="Coute Y."/>
            <person name="Deon C."/>
            <person name="Calle A."/>
            <person name="Kindbeiter K."/>
            <person name="Sanchez J.-C."/>
            <person name="Greco A."/>
            <person name="Hochstrasser D.F."/>
            <person name="Diaz J.-J."/>
        </authorList>
    </citation>
    <scope>SUBCELLULAR LOCATION [LARGE SCALE ANALYSIS]</scope>
    <source>
        <tissue>Cervix carcinoma</tissue>
    </source>
</reference>
<reference key="8">
    <citation type="journal article" date="2002" name="Genes Dev.">
        <title>A nucleolar mechanism controlling cell proliferation in stem and cancer cells.</title>
        <authorList>
            <person name="Tsai R.Y.L."/>
            <person name="McKay R.D.G."/>
        </authorList>
    </citation>
    <scope>FUNCTION</scope>
    <scope>INTERACTION WITH TP53</scope>
    <scope>SUBCELLULAR LOCATION</scope>
</reference>
<reference key="9">
    <citation type="journal article" date="2009" name="Sci. Signal.">
        <title>Quantitative phosphoproteomic analysis of T cell receptor signaling reveals system-wide modulation of protein-protein interactions.</title>
        <authorList>
            <person name="Mayya V."/>
            <person name="Lundgren D.H."/>
            <person name="Hwang S.-I."/>
            <person name="Rezaul K."/>
            <person name="Wu L."/>
            <person name="Eng J.K."/>
            <person name="Rodionov V."/>
            <person name="Han D.K."/>
        </authorList>
    </citation>
    <scope>PHOSPHORYLATION [LARGE SCALE ANALYSIS] AT SER-529</scope>
    <scope>IDENTIFICATION BY MASS SPECTROMETRY [LARGE SCALE ANALYSIS]</scope>
    <source>
        <tissue>Leukemic T-cell</tissue>
    </source>
</reference>
<reference key="10">
    <citation type="journal article" date="2009" name="Science">
        <title>Lysine acetylation targets protein complexes and co-regulates major cellular functions.</title>
        <authorList>
            <person name="Choudhary C."/>
            <person name="Kumar C."/>
            <person name="Gnad F."/>
            <person name="Nielsen M.L."/>
            <person name="Rehman M."/>
            <person name="Walther T.C."/>
            <person name="Olsen J.V."/>
            <person name="Mann M."/>
        </authorList>
    </citation>
    <scope>ACETYLATION [LARGE SCALE ANALYSIS] AT LYS-79</scope>
    <scope>IDENTIFICATION BY MASS SPECTROMETRY [LARGE SCALE ANALYSIS]</scope>
</reference>
<reference key="11">
    <citation type="journal article" date="2014" name="J. Proteomics">
        <title>An enzyme assisted RP-RPLC approach for in-depth analysis of human liver phosphoproteome.</title>
        <authorList>
            <person name="Bian Y."/>
            <person name="Song C."/>
            <person name="Cheng K."/>
            <person name="Dong M."/>
            <person name="Wang F."/>
            <person name="Huang J."/>
            <person name="Sun D."/>
            <person name="Wang L."/>
            <person name="Ye M."/>
            <person name="Zou H."/>
        </authorList>
    </citation>
    <scope>PHOSPHORYLATION [LARGE SCALE ANALYSIS] AT SER-490 AND SER-517</scope>
    <scope>IDENTIFICATION BY MASS SPECTROMETRY [LARGE SCALE ANALYSIS]</scope>
    <source>
        <tissue>Liver</tissue>
    </source>
</reference>
<reference key="12">
    <citation type="journal article" date="2014" name="Nat. Struct. Mol. Biol.">
        <title>Uncovering global SUMOylation signaling networks in a site-specific manner.</title>
        <authorList>
            <person name="Hendriks I.A."/>
            <person name="D'Souza R.C."/>
            <person name="Yang B."/>
            <person name="Verlaan-de Vries M."/>
            <person name="Mann M."/>
            <person name="Vertegaal A.C."/>
        </authorList>
    </citation>
    <scope>SUMOYLATION [LARGE SCALE ANALYSIS] AT LYS-99 AND LYS-114</scope>
    <scope>IDENTIFICATION BY MASS SPECTROMETRY [LARGE SCALE ANALYSIS]</scope>
</reference>
<reference key="13">
    <citation type="journal article" date="2014" name="Proc. Natl. Acad. Sci. U.S.A.">
        <title>Mapping of SUMO sites and analysis of SUMOylation changes induced by external stimuli.</title>
        <authorList>
            <person name="Impens F."/>
            <person name="Radoshevich L."/>
            <person name="Cossart P."/>
            <person name="Ribet D."/>
        </authorList>
    </citation>
    <scope>SUMOYLATION [LARGE SCALE ANALYSIS] AT LYS-99</scope>
    <scope>IDENTIFICATION BY MASS SPECTROMETRY [LARGE SCALE ANALYSIS]</scope>
</reference>
<reference key="14">
    <citation type="journal article" date="2017" name="Nat. Struct. Mol. Biol.">
        <title>Site-specific mapping of the human SUMO proteome reveals co-modification with phosphorylation.</title>
        <authorList>
            <person name="Hendriks I.A."/>
            <person name="Lyon D."/>
            <person name="Young C."/>
            <person name="Jensen L.J."/>
            <person name="Vertegaal A.C."/>
            <person name="Nielsen M.L."/>
        </authorList>
    </citation>
    <scope>SUMOYLATION [LARGE SCALE ANALYSIS] AT LYS-91; LYS-99; LYS-114; LYS-179; LYS-196; LYS-253; LYS-267 AND LYS-275</scope>
    <scope>IDENTIFICATION BY MASS SPECTROMETRY [LARGE SCALE ANALYSIS]</scope>
</reference>
<reference key="15">
    <citation type="journal article" date="2021" name="Int. J. Mol. Sci.">
        <title>Identification of Binding Proteins for TSC22D1 Family Proteins Using Mass Spectrometry.</title>
        <authorList>
            <person name="Kamimura R."/>
            <person name="Uchida D."/>
            <person name="Kanno S.I."/>
            <person name="Shiraishi R."/>
            <person name="Hyodo T."/>
            <person name="Sawatani Y."/>
            <person name="Shimura M."/>
            <person name="Hasegawa T."/>
            <person name="Tsubura-Okubo M."/>
            <person name="Yaguchi E."/>
            <person name="Komiyama Y."/>
            <person name="Fukumoto C."/>
            <person name="Izumi S."/>
            <person name="Fujita A."/>
            <person name="Wakui T."/>
            <person name="Kawamata H."/>
        </authorList>
    </citation>
    <scope>INTERACTION WITH TSC22D1 ISOFORM 2</scope>
</reference>
<reference key="16">
    <citation type="journal article" date="2011" name="BMC Syst. Biol.">
        <title>Initial characterization of the human central proteome.</title>
        <authorList>
            <person name="Burkard T.R."/>
            <person name="Planyavsky M."/>
            <person name="Kaupe I."/>
            <person name="Breitwieser F.P."/>
            <person name="Buerckstuemmer T."/>
            <person name="Bennett K.L."/>
            <person name="Superti-Furga G."/>
            <person name="Colinge J."/>
        </authorList>
    </citation>
    <scope>VARIANT [LARGE SCALE ANALYSIS] MET-367</scope>
    <scope>IDENTIFICATION BY MASS SPECTROMETRY [LARGE SCALE ANALYSIS]</scope>
</reference>
<organism>
    <name type="scientific">Homo sapiens</name>
    <name type="common">Human</name>
    <dbReference type="NCBI Taxonomy" id="9606"/>
    <lineage>
        <taxon>Eukaryota</taxon>
        <taxon>Metazoa</taxon>
        <taxon>Chordata</taxon>
        <taxon>Craniata</taxon>
        <taxon>Vertebrata</taxon>
        <taxon>Euteleostomi</taxon>
        <taxon>Mammalia</taxon>
        <taxon>Eutheria</taxon>
        <taxon>Euarchontoglires</taxon>
        <taxon>Primates</taxon>
        <taxon>Haplorrhini</taxon>
        <taxon>Catarrhini</taxon>
        <taxon>Hominidae</taxon>
        <taxon>Homo</taxon>
    </lineage>
</organism>
<dbReference type="EMBL" id="AF191018">
    <property type="protein sequence ID" value="AAF09482.1"/>
    <property type="status" value="ALT_FRAME"/>
    <property type="molecule type" value="mRNA"/>
</dbReference>
<dbReference type="EMBL" id="AY825265">
    <property type="protein sequence ID" value="AAV74413.1"/>
    <property type="molecule type" value="mRNA"/>
</dbReference>
<dbReference type="EMBL" id="AK027514">
    <property type="protein sequence ID" value="BAB55168.1"/>
    <property type="molecule type" value="mRNA"/>
</dbReference>
<dbReference type="EMBL" id="AK027516">
    <property type="protein sequence ID" value="BAB55169.1"/>
    <property type="molecule type" value="mRNA"/>
</dbReference>
<dbReference type="EMBL" id="AK315484">
    <property type="protein sequence ID" value="BAG37868.1"/>
    <property type="molecule type" value="mRNA"/>
</dbReference>
<dbReference type="EMBL" id="AC104446">
    <property type="status" value="NOT_ANNOTATED_CDS"/>
    <property type="molecule type" value="Genomic_DNA"/>
</dbReference>
<dbReference type="EMBL" id="BC001024">
    <property type="protein sequence ID" value="AAH01024.1"/>
    <property type="molecule type" value="mRNA"/>
</dbReference>
<dbReference type="CCDS" id="CCDS2861.1">
    <molecule id="Q9BVP2-1"/>
</dbReference>
<dbReference type="CCDS" id="CCDS43100.1">
    <molecule id="Q9BVP2-2"/>
</dbReference>
<dbReference type="RefSeq" id="NP_055181.3">
    <molecule id="Q9BVP2-1"/>
    <property type="nucleotide sequence ID" value="NM_014366.4"/>
</dbReference>
<dbReference type="RefSeq" id="NP_996561.1">
    <molecule id="Q9BVP2-2"/>
    <property type="nucleotide sequence ID" value="NM_206825.2"/>
</dbReference>
<dbReference type="RefSeq" id="NP_996562.1">
    <molecule id="Q9BVP2-2"/>
    <property type="nucleotide sequence ID" value="NM_206826.1"/>
</dbReference>
<dbReference type="PDB" id="8FKP">
    <property type="method" value="EM"/>
    <property type="resolution" value="2.85 A"/>
    <property type="chains" value="NB=1-549"/>
</dbReference>
<dbReference type="PDB" id="8FKR">
    <property type="method" value="EM"/>
    <property type="resolution" value="2.89 A"/>
    <property type="chains" value="NB=1-549"/>
</dbReference>
<dbReference type="PDB" id="8FKT">
    <property type="method" value="EM"/>
    <property type="resolution" value="2.81 A"/>
    <property type="chains" value="NB=1-549"/>
</dbReference>
<dbReference type="PDB" id="8FKU">
    <property type="method" value="EM"/>
    <property type="resolution" value="2.82 A"/>
    <property type="chains" value="NB=1-549"/>
</dbReference>
<dbReference type="PDB" id="8FKV">
    <property type="method" value="EM"/>
    <property type="resolution" value="2.47 A"/>
    <property type="chains" value="NB=1-549"/>
</dbReference>
<dbReference type="PDB" id="8FKW">
    <property type="method" value="EM"/>
    <property type="resolution" value="2.50 A"/>
    <property type="chains" value="NB=1-549"/>
</dbReference>
<dbReference type="PDB" id="8FKX">
    <property type="method" value="EM"/>
    <property type="resolution" value="2.59 A"/>
    <property type="chains" value="NB=1-549"/>
</dbReference>
<dbReference type="PDB" id="8FKY">
    <property type="method" value="EM"/>
    <property type="resolution" value="2.67 A"/>
    <property type="chains" value="NB=1-549"/>
</dbReference>
<dbReference type="PDB" id="8FKZ">
    <property type="method" value="EM"/>
    <property type="resolution" value="3.04 A"/>
    <property type="chains" value="NB=1-549"/>
</dbReference>
<dbReference type="PDB" id="8FL0">
    <property type="method" value="EM"/>
    <property type="resolution" value="2.91 A"/>
    <property type="chains" value="NB=1-549"/>
</dbReference>
<dbReference type="PDB" id="8FL2">
    <property type="method" value="EM"/>
    <property type="resolution" value="2.67 A"/>
    <property type="chains" value="NB=1-549"/>
</dbReference>
<dbReference type="PDB" id="8FL3">
    <property type="method" value="EM"/>
    <property type="resolution" value="2.53 A"/>
    <property type="chains" value="NB=1-549"/>
</dbReference>
<dbReference type="PDB" id="8FL4">
    <property type="method" value="EM"/>
    <property type="resolution" value="2.89 A"/>
    <property type="chains" value="NB=1-549"/>
</dbReference>
<dbReference type="PDB" id="8INK">
    <property type="method" value="EM"/>
    <property type="resolution" value="3.20 A"/>
    <property type="chains" value="u=1-549"/>
</dbReference>
<dbReference type="PDB" id="8IPD">
    <property type="method" value="EM"/>
    <property type="resolution" value="3.20 A"/>
    <property type="chains" value="u=1-549"/>
</dbReference>
<dbReference type="PDB" id="8IPX">
    <property type="method" value="EM"/>
    <property type="resolution" value="4.30 A"/>
    <property type="chains" value="u=1-549"/>
</dbReference>
<dbReference type="PDB" id="8IPY">
    <property type="method" value="EM"/>
    <property type="resolution" value="3.20 A"/>
    <property type="chains" value="u=1-549"/>
</dbReference>
<dbReference type="PDB" id="8IR1">
    <property type="method" value="EM"/>
    <property type="resolution" value="3.30 A"/>
    <property type="chains" value="u=1-549"/>
</dbReference>
<dbReference type="PDB" id="8IR3">
    <property type="method" value="EM"/>
    <property type="resolution" value="3.50 A"/>
    <property type="chains" value="u=1-549"/>
</dbReference>
<dbReference type="PDB" id="8RL2">
    <property type="method" value="EM"/>
    <property type="resolution" value="2.84 A"/>
    <property type="chains" value="CC=1-549"/>
</dbReference>
<dbReference type="PDBsum" id="8FKP"/>
<dbReference type="PDBsum" id="8FKR"/>
<dbReference type="PDBsum" id="8FKT"/>
<dbReference type="PDBsum" id="8FKU"/>
<dbReference type="PDBsum" id="8FKV"/>
<dbReference type="PDBsum" id="8FKW"/>
<dbReference type="PDBsum" id="8FKX"/>
<dbReference type="PDBsum" id="8FKY"/>
<dbReference type="PDBsum" id="8FKZ"/>
<dbReference type="PDBsum" id="8FL0"/>
<dbReference type="PDBsum" id="8FL2"/>
<dbReference type="PDBsum" id="8FL3"/>
<dbReference type="PDBsum" id="8FL4"/>
<dbReference type="PDBsum" id="8INK"/>
<dbReference type="PDBsum" id="8IPD"/>
<dbReference type="PDBsum" id="8IPX"/>
<dbReference type="PDBsum" id="8IPY"/>
<dbReference type="PDBsum" id="8IR1"/>
<dbReference type="PDBsum" id="8IR3"/>
<dbReference type="PDBsum" id="8RL2"/>
<dbReference type="EMDB" id="EMD-19330"/>
<dbReference type="EMDB" id="EMD-29252"/>
<dbReference type="EMDB" id="EMD-29254"/>
<dbReference type="EMDB" id="EMD-29256"/>
<dbReference type="EMDB" id="EMD-29257"/>
<dbReference type="EMDB" id="EMD-29258"/>
<dbReference type="EMDB" id="EMD-29259"/>
<dbReference type="EMDB" id="EMD-29260"/>
<dbReference type="EMDB" id="EMD-29261"/>
<dbReference type="EMDB" id="EMD-29262"/>
<dbReference type="EMDB" id="EMD-29263"/>
<dbReference type="EMDB" id="EMD-29265"/>
<dbReference type="EMDB" id="EMD-29266"/>
<dbReference type="EMDB" id="EMD-29267"/>
<dbReference type="EMDB" id="EMD-35599"/>
<dbReference type="EMDB" id="EMD-35639"/>
<dbReference type="EMDB" id="EMD-35649"/>
<dbReference type="EMDB" id="EMD-35651"/>
<dbReference type="EMDB" id="EMD-35672"/>
<dbReference type="EMDB" id="EMD-35673"/>
<dbReference type="SMR" id="Q9BVP2"/>
<dbReference type="BioGRID" id="117690">
    <property type="interactions" value="355"/>
</dbReference>
<dbReference type="CORUM" id="Q9BVP2"/>
<dbReference type="FunCoup" id="Q9BVP2">
    <property type="interactions" value="1823"/>
</dbReference>
<dbReference type="IntAct" id="Q9BVP2">
    <property type="interactions" value="436"/>
</dbReference>
<dbReference type="MINT" id="Q9BVP2"/>
<dbReference type="STRING" id="9606.ENSP00000395772"/>
<dbReference type="GlyGen" id="Q9BVP2">
    <property type="glycosylation" value="1 site, 1 O-linked glycan (1 site)"/>
</dbReference>
<dbReference type="iPTMnet" id="Q9BVP2"/>
<dbReference type="MetOSite" id="Q9BVP2"/>
<dbReference type="PhosphoSitePlus" id="Q9BVP2"/>
<dbReference type="SwissPalm" id="Q9BVP2"/>
<dbReference type="BioMuta" id="GNL3"/>
<dbReference type="DMDM" id="229462872"/>
<dbReference type="CPTAC" id="CPTAC-76"/>
<dbReference type="CPTAC" id="CPTAC-77"/>
<dbReference type="jPOST" id="Q9BVP2"/>
<dbReference type="MassIVE" id="Q9BVP2"/>
<dbReference type="PaxDb" id="9606-ENSP00000395772"/>
<dbReference type="PeptideAtlas" id="Q9BVP2"/>
<dbReference type="ProteomicsDB" id="79223">
    <molecule id="Q9BVP2-1"/>
</dbReference>
<dbReference type="ProteomicsDB" id="79224">
    <molecule id="Q9BVP2-2"/>
</dbReference>
<dbReference type="Pumba" id="Q9BVP2"/>
<dbReference type="Antibodypedia" id="31298">
    <property type="antibodies" value="556 antibodies from 40 providers"/>
</dbReference>
<dbReference type="DNASU" id="26354"/>
<dbReference type="Ensembl" id="ENST00000394799.6">
    <molecule id="Q9BVP2-2"/>
    <property type="protein sequence ID" value="ENSP00000378278.2"/>
    <property type="gene ID" value="ENSG00000163938.17"/>
</dbReference>
<dbReference type="Ensembl" id="ENST00000418458.6">
    <molecule id="Q9BVP2-1"/>
    <property type="protein sequence ID" value="ENSP00000395772.1"/>
    <property type="gene ID" value="ENSG00000163938.17"/>
</dbReference>
<dbReference type="GeneID" id="26354"/>
<dbReference type="KEGG" id="hsa:26354"/>
<dbReference type="MANE-Select" id="ENST00000418458.6">
    <property type="protein sequence ID" value="ENSP00000395772.1"/>
    <property type="RefSeq nucleotide sequence ID" value="NM_014366.5"/>
    <property type="RefSeq protein sequence ID" value="NP_055181.3"/>
</dbReference>
<dbReference type="UCSC" id="uc003dfd.4">
    <molecule id="Q9BVP2-1"/>
    <property type="organism name" value="human"/>
</dbReference>
<dbReference type="AGR" id="HGNC:29931"/>
<dbReference type="CTD" id="26354"/>
<dbReference type="DisGeNET" id="26354"/>
<dbReference type="GeneCards" id="GNL3"/>
<dbReference type="HGNC" id="HGNC:29931">
    <property type="gene designation" value="GNL3"/>
</dbReference>
<dbReference type="HPA" id="ENSG00000163938">
    <property type="expression patterns" value="Low tissue specificity"/>
</dbReference>
<dbReference type="MIM" id="608011">
    <property type="type" value="gene"/>
</dbReference>
<dbReference type="neXtProt" id="NX_Q9BVP2"/>
<dbReference type="OpenTargets" id="ENSG00000163938"/>
<dbReference type="PharmGKB" id="PA134952132"/>
<dbReference type="VEuPathDB" id="HostDB:ENSG00000163938"/>
<dbReference type="eggNOG" id="KOG2484">
    <property type="taxonomic scope" value="Eukaryota"/>
</dbReference>
<dbReference type="GeneTree" id="ENSGT00940000158320"/>
<dbReference type="HOGENOM" id="CLU_011106_5_6_1"/>
<dbReference type="InParanoid" id="Q9BVP2"/>
<dbReference type="OMA" id="FKLDGLW"/>
<dbReference type="OrthoDB" id="444945at2759"/>
<dbReference type="PAN-GO" id="Q9BVP2">
    <property type="GO annotations" value="1 GO annotation based on evolutionary models"/>
</dbReference>
<dbReference type="PhylomeDB" id="Q9BVP2"/>
<dbReference type="TreeFam" id="TF313085"/>
<dbReference type="PathwayCommons" id="Q9BVP2"/>
<dbReference type="Reactome" id="R-HSA-6791226">
    <property type="pathway name" value="Major pathway of rRNA processing in the nucleolus and cytosol"/>
</dbReference>
<dbReference type="SignaLink" id="Q9BVP2"/>
<dbReference type="BioGRID-ORCS" id="26354">
    <property type="hits" value="800 hits in 1167 CRISPR screens"/>
</dbReference>
<dbReference type="CD-CODE" id="232F8A39">
    <property type="entry name" value="P-body"/>
</dbReference>
<dbReference type="CD-CODE" id="91857CE7">
    <property type="entry name" value="Nucleolus"/>
</dbReference>
<dbReference type="ChiTaRS" id="GNL3">
    <property type="organism name" value="human"/>
</dbReference>
<dbReference type="GeneWiki" id="GNL3"/>
<dbReference type="GenomeRNAi" id="26354"/>
<dbReference type="Pharos" id="Q9BVP2">
    <property type="development level" value="Tbio"/>
</dbReference>
<dbReference type="PRO" id="PR:Q9BVP2"/>
<dbReference type="Proteomes" id="UP000005640">
    <property type="component" value="Chromosome 3"/>
</dbReference>
<dbReference type="RNAct" id="Q9BVP2">
    <property type="molecule type" value="protein"/>
</dbReference>
<dbReference type="Bgee" id="ENSG00000163938">
    <property type="expression patterns" value="Expressed in calcaneal tendon and 207 other cell types or tissues"/>
</dbReference>
<dbReference type="ExpressionAtlas" id="Q9BVP2">
    <property type="expression patterns" value="baseline and differential"/>
</dbReference>
<dbReference type="GO" id="GO:0005694">
    <property type="term" value="C:chromosome"/>
    <property type="evidence" value="ECO:0000314"/>
    <property type="project" value="HPA"/>
</dbReference>
<dbReference type="GO" id="GO:0005615">
    <property type="term" value="C:extracellular space"/>
    <property type="evidence" value="ECO:0007005"/>
    <property type="project" value="UniProtKB"/>
</dbReference>
<dbReference type="GO" id="GO:0016020">
    <property type="term" value="C:membrane"/>
    <property type="evidence" value="ECO:0007005"/>
    <property type="project" value="UniProtKB"/>
</dbReference>
<dbReference type="GO" id="GO:0030496">
    <property type="term" value="C:midbody"/>
    <property type="evidence" value="ECO:0000314"/>
    <property type="project" value="HPA"/>
</dbReference>
<dbReference type="GO" id="GO:0016604">
    <property type="term" value="C:nuclear body"/>
    <property type="evidence" value="ECO:0000314"/>
    <property type="project" value="HPA"/>
</dbReference>
<dbReference type="GO" id="GO:0005730">
    <property type="term" value="C:nucleolus"/>
    <property type="evidence" value="ECO:0000314"/>
    <property type="project" value="BHF-UCL"/>
</dbReference>
<dbReference type="GO" id="GO:0005634">
    <property type="term" value="C:nucleus"/>
    <property type="evidence" value="ECO:0000250"/>
    <property type="project" value="UniProtKB"/>
</dbReference>
<dbReference type="GO" id="GO:0005525">
    <property type="term" value="F:GTP binding"/>
    <property type="evidence" value="ECO:0000250"/>
    <property type="project" value="UniProtKB"/>
</dbReference>
<dbReference type="GO" id="GO:0048027">
    <property type="term" value="F:mRNA 5'-UTR binding"/>
    <property type="evidence" value="ECO:0000314"/>
    <property type="project" value="CAFA"/>
</dbReference>
<dbReference type="GO" id="GO:0003723">
    <property type="term" value="F:RNA binding"/>
    <property type="evidence" value="ECO:0007005"/>
    <property type="project" value="UniProtKB"/>
</dbReference>
<dbReference type="GO" id="GO:1902895">
    <property type="term" value="P:positive regulation of miRNA transcription"/>
    <property type="evidence" value="ECO:0000315"/>
    <property type="project" value="BHF-UCL"/>
</dbReference>
<dbReference type="GO" id="GO:1904816">
    <property type="term" value="P:positive regulation of protein localization to chromosome, telomeric region"/>
    <property type="evidence" value="ECO:0000315"/>
    <property type="project" value="BHF-UCL"/>
</dbReference>
<dbReference type="GO" id="GO:0033235">
    <property type="term" value="P:positive regulation of protein sumoylation"/>
    <property type="evidence" value="ECO:0000315"/>
    <property type="project" value="BHF-UCL"/>
</dbReference>
<dbReference type="GO" id="GO:0032206">
    <property type="term" value="P:positive regulation of telomere maintenance"/>
    <property type="evidence" value="ECO:0000315"/>
    <property type="project" value="BHF-UCL"/>
</dbReference>
<dbReference type="GO" id="GO:0042127">
    <property type="term" value="P:regulation of cell population proliferation"/>
    <property type="evidence" value="ECO:0000250"/>
    <property type="project" value="UniProtKB"/>
</dbReference>
<dbReference type="GO" id="GO:0017145">
    <property type="term" value="P:stem cell division"/>
    <property type="evidence" value="ECO:0000314"/>
    <property type="project" value="UniProtKB"/>
</dbReference>
<dbReference type="GO" id="GO:0019827">
    <property type="term" value="P:stem cell population maintenance"/>
    <property type="evidence" value="ECO:0000315"/>
    <property type="project" value="UniProtKB"/>
</dbReference>
<dbReference type="CDD" id="cd04178">
    <property type="entry name" value="Nucleostemin_like"/>
    <property type="match status" value="1"/>
</dbReference>
<dbReference type="FunFam" id="3.40.50.300:FF:001106">
    <property type="entry name" value="Guanine nucleotide-binding protein-like 3"/>
    <property type="match status" value="1"/>
</dbReference>
<dbReference type="Gene3D" id="3.40.50.300">
    <property type="entry name" value="P-loop containing nucleotide triphosphate hydrolases"/>
    <property type="match status" value="1"/>
</dbReference>
<dbReference type="InterPro" id="IPR030378">
    <property type="entry name" value="G_CP_dom"/>
</dbReference>
<dbReference type="InterPro" id="IPR014813">
    <property type="entry name" value="Gnl3_N_dom"/>
</dbReference>
<dbReference type="InterPro" id="IPR006073">
    <property type="entry name" value="GTP-bd"/>
</dbReference>
<dbReference type="InterPro" id="IPR027417">
    <property type="entry name" value="P-loop_NTPase"/>
</dbReference>
<dbReference type="InterPro" id="IPR050755">
    <property type="entry name" value="TRAFAC_YlqF/YawG_RiboMat"/>
</dbReference>
<dbReference type="PANTHER" id="PTHR11089">
    <property type="entry name" value="GTP-BINDING PROTEIN-RELATED"/>
    <property type="match status" value="1"/>
</dbReference>
<dbReference type="PANTHER" id="PTHR11089:SF11">
    <property type="entry name" value="GUANINE NUCLEOTIDE-BINDING PROTEIN-LIKE 3"/>
    <property type="match status" value="1"/>
</dbReference>
<dbReference type="Pfam" id="PF08701">
    <property type="entry name" value="GN3L_Grn1"/>
    <property type="match status" value="1"/>
</dbReference>
<dbReference type="Pfam" id="PF01926">
    <property type="entry name" value="MMR_HSR1"/>
    <property type="match status" value="1"/>
</dbReference>
<dbReference type="SUPFAM" id="SSF52540">
    <property type="entry name" value="P-loop containing nucleoside triphosphate hydrolases"/>
    <property type="match status" value="1"/>
</dbReference>
<dbReference type="PROSITE" id="PS51721">
    <property type="entry name" value="G_CP"/>
    <property type="match status" value="1"/>
</dbReference>
<gene>
    <name type="primary">GNL3</name>
    <name type="synonym">E2IG3</name>
    <name type="synonym">NS</name>
</gene>
<evidence type="ECO:0000250" key="1"/>
<evidence type="ECO:0000250" key="2">
    <source>
        <dbReference type="UniProtKB" id="Q811S9"/>
    </source>
</evidence>
<evidence type="ECO:0000250" key="3">
    <source>
        <dbReference type="UniProtKB" id="Q8CI11"/>
    </source>
</evidence>
<evidence type="ECO:0000255" key="4"/>
<evidence type="ECO:0000255" key="5">
    <source>
        <dbReference type="PROSITE-ProRule" id="PRU01058"/>
    </source>
</evidence>
<evidence type="ECO:0000256" key="6">
    <source>
        <dbReference type="SAM" id="MobiDB-lite"/>
    </source>
</evidence>
<evidence type="ECO:0000269" key="7">
    <source>
    </source>
</evidence>
<evidence type="ECO:0000269" key="8">
    <source>
    </source>
</evidence>
<evidence type="ECO:0000269" key="9">
    <source>
    </source>
</evidence>
<evidence type="ECO:0000269" key="10">
    <source>
    </source>
</evidence>
<evidence type="ECO:0000269" key="11">
    <source>
    </source>
</evidence>
<evidence type="ECO:0000269" key="12">
    <source>
    </source>
</evidence>
<evidence type="ECO:0000269" key="13">
    <source>
    </source>
</evidence>
<evidence type="ECO:0000303" key="14">
    <source>
    </source>
</evidence>
<evidence type="ECO:0000305" key="15"/>
<evidence type="ECO:0007744" key="16">
    <source>
    </source>
</evidence>
<evidence type="ECO:0007744" key="17">
    <source>
    </source>
</evidence>
<evidence type="ECO:0007744" key="18">
    <source>
    </source>
</evidence>
<evidence type="ECO:0007744" key="19">
    <source>
    </source>
</evidence>
<evidence type="ECO:0007744" key="20">
    <source>
    </source>
</evidence>
<evidence type="ECO:0007744" key="21">
    <source>
    </source>
</evidence>
<evidence type="ECO:0007744" key="22">
    <source>
    </source>
</evidence>
<accession>Q9BVP2</accession>
<accession>B2RDC1</accession>
<accession>Q5PU80</accession>
<accession>Q96SV6</accession>
<accession>Q96SV7</accession>
<accession>Q9UJY0</accession>
<keyword id="KW-0002">3D-structure</keyword>
<keyword id="KW-0007">Acetylation</keyword>
<keyword id="KW-0025">Alternative splicing</keyword>
<keyword id="KW-0175">Coiled coil</keyword>
<keyword id="KW-0342">GTP-binding</keyword>
<keyword id="KW-1017">Isopeptide bond</keyword>
<keyword id="KW-0547">Nucleotide-binding</keyword>
<keyword id="KW-0539">Nucleus</keyword>
<keyword id="KW-0597">Phosphoprotein</keyword>
<keyword id="KW-1267">Proteomics identification</keyword>
<keyword id="KW-1185">Reference proteome</keyword>
<keyword id="KW-0832">Ubl conjugation</keyword>
<name>GNL3_HUMAN</name>
<comment type="function">
    <text evidence="1 10 12">May be required to maintain the proliferative capacity of stem cells. Stabilizes MDM2 by preventing its ubiquitination, and hence proteasomal degradation (By similarity).</text>
</comment>
<comment type="subunit">
    <text evidence="3 10 13">Interacts with MDM2; this interaction stabilizes MDM2 (By similarity). Interaction with MDM2 occurs in the nucleoplasm and is triggered by a nucleolar release mechanism, such as mitosis-induced nucleolar disassembly (By similarity). Indirectly interacts with TP53, via MDM2-binding (PubMed:12464630). Interacts with TSC22D1 isoform 2 (PubMed:34681573).</text>
</comment>
<comment type="interaction">
    <interactant intactId="EBI-641642">
        <id>Q9BVP2</id>
    </interactant>
    <interactant intactId="EBI-528269">
        <id>Q9UKV8</id>
        <label>AGO2</label>
    </interactant>
    <organismsDiffer>false</organismsDiffer>
    <experiments>3</experiments>
</comment>
<comment type="interaction">
    <interactant intactId="EBI-641642">
        <id>Q9BVP2</id>
    </interactant>
    <interactant intactId="EBI-741885">
        <id>Q96LK0</id>
        <label>CEP19</label>
    </interactant>
    <organismsDiffer>false</organismsDiffer>
    <experiments>4</experiments>
</comment>
<comment type="interaction">
    <interactant intactId="EBI-641642">
        <id>Q9BVP2</id>
    </interactant>
    <interactant intactId="EBI-389668">
        <id>Q00987</id>
        <label>MDM2</label>
    </interactant>
    <organismsDiffer>false</organismsDiffer>
    <experiments>3</experiments>
</comment>
<comment type="interaction">
    <interactant intactId="EBI-641642">
        <id>Q9BVP2</id>
    </interactant>
    <interactant intactId="EBI-743801">
        <id>Q9NVX2</id>
        <label>NLE1</label>
    </interactant>
    <organismsDiffer>false</organismsDiffer>
    <experiments>2</experiments>
</comment>
<comment type="interaction">
    <interactant intactId="EBI-641642">
        <id>Q9BVP2</id>
    </interactant>
    <interactant intactId="EBI-641666">
        <id>Q15172</id>
        <label>PPP2R5A</label>
    </interactant>
    <organismsDiffer>false</organismsDiffer>
    <experiments>3</experiments>
</comment>
<comment type="interaction">
    <interactant intactId="EBI-641642">
        <id>Q9BVP2</id>
    </interactant>
    <interactant intactId="EBI-518675">
        <id>P40763</id>
        <label>STAT3</label>
    </interactant>
    <organismsDiffer>false</organismsDiffer>
    <experiments>2</experiments>
</comment>
<comment type="interaction">
    <interactant intactId="EBI-641642">
        <id>Q9BVP2</id>
    </interactant>
    <interactant intactId="EBI-1772203">
        <id>O14746</id>
        <label>TERT</label>
    </interactant>
    <organismsDiffer>false</organismsDiffer>
    <experiments>3</experiments>
</comment>
<comment type="interaction">
    <interactant intactId="EBI-641642">
        <id>Q9BVP2</id>
    </interactant>
    <interactant intactId="EBI-12034704">
        <id>Q15714-2</id>
        <label>TSC22D1</label>
    </interactant>
    <organismsDiffer>false</organismsDiffer>
    <experiments>2</experiments>
</comment>
<comment type="subcellular location">
    <subcellularLocation>
        <location evidence="2">Nucleus</location>
    </subcellularLocation>
    <subcellularLocation>
        <location evidence="8 9 10">Nucleus</location>
        <location evidence="8 9 10">Nucleolus</location>
    </subcellularLocation>
    <text evidence="2">Shuttles between the nucleus and nucleolus.</text>
</comment>
<comment type="alternative products">
    <event type="alternative splicing"/>
    <isoform>
        <id>Q9BVP2-1</id>
        <name>1</name>
        <sequence type="displayed"/>
    </isoform>
    <isoform>
        <id>Q9BVP2-2</id>
        <name>2</name>
        <sequence type="described" ref="VSP_013411"/>
    </isoform>
</comment>
<comment type="tissue specificity">
    <text evidence="12">Increased levels in lung tissue in cancer patients.</text>
</comment>
<comment type="domain">
    <text evidence="1">The basic domain (B) allows nucleolar localization in the absence of GTP. The intermediate domain (I) inhibits nucleolar localization by the B domain and is required for exit from the nucleolus. Exit from the nucleolus to the nucleoplasm requires both the I and the acidic (A) domains, and may be triggered by GTP hydrolysis (By similarity).</text>
</comment>
<comment type="domain">
    <text>In contrast to other GTP-binding proteins, this family is characterized by a circular permutation of the GTPase motifs described by a G4-G1-G3 pattern.</text>
</comment>
<comment type="similarity">
    <text evidence="5">Belongs to the TRAFAC class YlqF/YawG GTPase family.</text>
</comment>
<comment type="sequence caution" evidence="15">
    <conflict type="frameshift">
        <sequence resource="EMBL-CDS" id="AAF09482"/>
    </conflict>
</comment>